<reference key="1">
    <citation type="submission" date="1999-12" db="EMBL/GenBank/DDBJ databases">
        <title>Candida glabrata eIF4E gene.</title>
        <authorList>
            <person name="Ono N."/>
            <person name="Sudoh M."/>
        </authorList>
    </citation>
    <scope>NUCLEOTIDE SEQUENCE [GENOMIC DNA]</scope>
</reference>
<reference key="2">
    <citation type="journal article" date="2004" name="Nature">
        <title>Genome evolution in yeasts.</title>
        <authorList>
            <person name="Dujon B."/>
            <person name="Sherman D."/>
            <person name="Fischer G."/>
            <person name="Durrens P."/>
            <person name="Casaregola S."/>
            <person name="Lafontaine I."/>
            <person name="de Montigny J."/>
            <person name="Marck C."/>
            <person name="Neuveglise C."/>
            <person name="Talla E."/>
            <person name="Goffard N."/>
            <person name="Frangeul L."/>
            <person name="Aigle M."/>
            <person name="Anthouard V."/>
            <person name="Babour A."/>
            <person name="Barbe V."/>
            <person name="Barnay S."/>
            <person name="Blanchin S."/>
            <person name="Beckerich J.-M."/>
            <person name="Beyne E."/>
            <person name="Bleykasten C."/>
            <person name="Boisrame A."/>
            <person name="Boyer J."/>
            <person name="Cattolico L."/>
            <person name="Confanioleri F."/>
            <person name="de Daruvar A."/>
            <person name="Despons L."/>
            <person name="Fabre E."/>
            <person name="Fairhead C."/>
            <person name="Ferry-Dumazet H."/>
            <person name="Groppi A."/>
            <person name="Hantraye F."/>
            <person name="Hennequin C."/>
            <person name="Jauniaux N."/>
            <person name="Joyet P."/>
            <person name="Kachouri R."/>
            <person name="Kerrest A."/>
            <person name="Koszul R."/>
            <person name="Lemaire M."/>
            <person name="Lesur I."/>
            <person name="Ma L."/>
            <person name="Muller H."/>
            <person name="Nicaud J.-M."/>
            <person name="Nikolski M."/>
            <person name="Oztas S."/>
            <person name="Ozier-Kalogeropoulos O."/>
            <person name="Pellenz S."/>
            <person name="Potier S."/>
            <person name="Richard G.-F."/>
            <person name="Straub M.-L."/>
            <person name="Suleau A."/>
            <person name="Swennen D."/>
            <person name="Tekaia F."/>
            <person name="Wesolowski-Louvel M."/>
            <person name="Westhof E."/>
            <person name="Wirth B."/>
            <person name="Zeniou-Meyer M."/>
            <person name="Zivanovic Y."/>
            <person name="Bolotin-Fukuhara M."/>
            <person name="Thierry A."/>
            <person name="Bouchier C."/>
            <person name="Caudron B."/>
            <person name="Scarpelli C."/>
            <person name="Gaillardin C."/>
            <person name="Weissenbach J."/>
            <person name="Wincker P."/>
            <person name="Souciet J.-L."/>
        </authorList>
    </citation>
    <scope>NUCLEOTIDE SEQUENCE [LARGE SCALE GENOMIC DNA]</scope>
    <source>
        <strain>ATCC 2001 / BCRC 20586 / JCM 3761 / NBRC 0622 / NRRL Y-65 / CBS 138</strain>
    </source>
</reference>
<gene>
    <name type="primary">TIF45</name>
    <name type="ordered locus">CAGL0E01463g</name>
</gene>
<organism>
    <name type="scientific">Candida glabrata (strain ATCC 2001 / BCRC 20586 / JCM 3761 / NBRC 0622 / NRRL Y-65 / CBS 138)</name>
    <name type="common">Yeast</name>
    <name type="synonym">Nakaseomyces glabratus</name>
    <dbReference type="NCBI Taxonomy" id="284593"/>
    <lineage>
        <taxon>Eukaryota</taxon>
        <taxon>Fungi</taxon>
        <taxon>Dikarya</taxon>
        <taxon>Ascomycota</taxon>
        <taxon>Saccharomycotina</taxon>
        <taxon>Saccharomycetes</taxon>
        <taxon>Saccharomycetales</taxon>
        <taxon>Saccharomycetaceae</taxon>
        <taxon>Nakaseomyces</taxon>
    </lineage>
</organism>
<sequence length="209" mass="23899">MSVDEVTKKFEETVSVDGPKTVLSDAKDFEVKHPLNTKWTLWYTKPAVDKSESWSDLLRPVTSFQSVEEFWAIVQNIPEPHELPLKSDYHVFRNDIRPEWEDSANAKGGKWSFQVRGRGAEIDELWLRTLLAVIGETIDEEDSQINGVVLNVRKGGNRFALWTKSCDKEPLSNIGARFKQVLKLADEDTLEFFPHSTANDRHSQPTITL</sequence>
<proteinExistence type="inferred from homology"/>
<feature type="chain" id="PRO_0000193650" description="Eukaryotic translation initiation factor 4E">
    <location>
        <begin position="1"/>
        <end position="209"/>
    </location>
</feature>
<feature type="sequence conflict" description="In Ref. 1; BAA93571." evidence="2" ref="1">
    <original>S</original>
    <variation>E</variation>
    <location>
        <position position="103"/>
    </location>
</feature>
<evidence type="ECO:0000250" key="1"/>
<evidence type="ECO:0000305" key="2"/>
<name>IF4E_CANGA</name>
<comment type="function">
    <text evidence="1">Recognizes and binds the 7-methylguanosine-containing mRNA cap during an early step in the initiation of protein synthesis and facilitates ribosome binding by inducing the unwinding of the mRNAs secondary structures.</text>
</comment>
<comment type="subunit">
    <text evidence="1">eIF4F is a multi-subunit complex, the composition of which varies with external and internal environmental conditions. It is composed of at least eIF4A, eIF4E and eIF4G. eIF4E is also known to interact with other partners (By similarity).</text>
</comment>
<comment type="similarity">
    <text evidence="2">Belongs to the eukaryotic initiation factor 4E family.</text>
</comment>
<protein>
    <recommendedName>
        <fullName>Eukaryotic translation initiation factor 4E</fullName>
        <shortName>eIF-4E</shortName>
        <shortName>eIF4E</shortName>
    </recommendedName>
    <alternativeName>
        <fullName>eIF-4F 25 kDa subunit</fullName>
    </alternativeName>
    <alternativeName>
        <fullName>mRNA cap-binding protein</fullName>
    </alternativeName>
</protein>
<keyword id="KW-0396">Initiation factor</keyword>
<keyword id="KW-0648">Protein biosynthesis</keyword>
<keyword id="KW-1185">Reference proteome</keyword>
<keyword id="KW-0694">RNA-binding</keyword>
<keyword id="KW-0810">Translation regulation</keyword>
<dbReference type="EMBL" id="AB036333">
    <property type="protein sequence ID" value="BAA93571.1"/>
    <property type="molecule type" value="Genomic_DNA"/>
</dbReference>
<dbReference type="EMBL" id="CR380951">
    <property type="protein sequence ID" value="CAG58671.1"/>
    <property type="molecule type" value="Genomic_DNA"/>
</dbReference>
<dbReference type="SMR" id="Q9P974"/>
<dbReference type="FunCoup" id="Q9P974">
    <property type="interactions" value="1411"/>
</dbReference>
<dbReference type="STRING" id="284593.Q9P974"/>
<dbReference type="EnsemblFungi" id="CAGL0E01463g-T">
    <property type="protein sequence ID" value="CAGL0E01463g-T-p1"/>
    <property type="gene ID" value="CAGL0E01463g"/>
</dbReference>
<dbReference type="KEGG" id="cgr:2887437"/>
<dbReference type="CGD" id="CAL0128640">
    <property type="gene designation" value="CDC33"/>
</dbReference>
<dbReference type="VEuPathDB" id="FungiDB:B1J91_E01463g"/>
<dbReference type="VEuPathDB" id="FungiDB:CAGL0E01463g"/>
<dbReference type="eggNOG" id="KOG1670">
    <property type="taxonomic scope" value="Eukaryota"/>
</dbReference>
<dbReference type="HOGENOM" id="CLU_043552_2_2_1"/>
<dbReference type="InParanoid" id="Q9P974"/>
<dbReference type="OMA" id="EEFWAIV"/>
<dbReference type="Proteomes" id="UP000002428">
    <property type="component" value="Chromosome E"/>
</dbReference>
<dbReference type="GO" id="GO:0010494">
    <property type="term" value="C:cytoplasmic stress granule"/>
    <property type="evidence" value="ECO:0007669"/>
    <property type="project" value="EnsemblFungi"/>
</dbReference>
<dbReference type="GO" id="GO:0016281">
    <property type="term" value="C:eukaryotic translation initiation factor 4F complex"/>
    <property type="evidence" value="ECO:0007669"/>
    <property type="project" value="EnsemblFungi"/>
</dbReference>
<dbReference type="GO" id="GO:0005634">
    <property type="term" value="C:nucleus"/>
    <property type="evidence" value="ECO:0007669"/>
    <property type="project" value="EnsemblFungi"/>
</dbReference>
<dbReference type="GO" id="GO:0098808">
    <property type="term" value="F:mRNA cap binding"/>
    <property type="evidence" value="ECO:0007669"/>
    <property type="project" value="EnsemblFungi"/>
</dbReference>
<dbReference type="GO" id="GO:0032266">
    <property type="term" value="F:phosphatidylinositol-3-phosphate binding"/>
    <property type="evidence" value="ECO:0007669"/>
    <property type="project" value="EnsemblFungi"/>
</dbReference>
<dbReference type="GO" id="GO:0000340">
    <property type="term" value="F:RNA 7-methylguanosine cap binding"/>
    <property type="evidence" value="ECO:0007669"/>
    <property type="project" value="TreeGrafter"/>
</dbReference>
<dbReference type="GO" id="GO:0003743">
    <property type="term" value="F:translation initiation factor activity"/>
    <property type="evidence" value="ECO:0007669"/>
    <property type="project" value="UniProtKB-KW"/>
</dbReference>
<dbReference type="GO" id="GO:0000184">
    <property type="term" value="P:nuclear-transcribed mRNA catabolic process, nonsense-mediated decay"/>
    <property type="evidence" value="ECO:0007669"/>
    <property type="project" value="EnsemblFungi"/>
</dbReference>
<dbReference type="GO" id="GO:1901195">
    <property type="term" value="P:positive regulation of formation of translation preinitiation complex"/>
    <property type="evidence" value="ECO:0007669"/>
    <property type="project" value="EnsemblFungi"/>
</dbReference>
<dbReference type="GO" id="GO:0051726">
    <property type="term" value="P:regulation of cell cycle"/>
    <property type="evidence" value="ECO:0007669"/>
    <property type="project" value="EnsemblFungi"/>
</dbReference>
<dbReference type="FunFam" id="3.30.760.10:FF:000011">
    <property type="entry name" value="Eukaryotic translation initiation factor 4E"/>
    <property type="match status" value="1"/>
</dbReference>
<dbReference type="Gene3D" id="3.30.760.10">
    <property type="entry name" value="RNA Cap, Translation Initiation Factor Eif4e"/>
    <property type="match status" value="1"/>
</dbReference>
<dbReference type="InterPro" id="IPR023398">
    <property type="entry name" value="TIF_eIF4e-like"/>
</dbReference>
<dbReference type="InterPro" id="IPR001040">
    <property type="entry name" value="TIF_eIF_4E"/>
</dbReference>
<dbReference type="InterPro" id="IPR019770">
    <property type="entry name" value="TIF_eIF_4E_CS"/>
</dbReference>
<dbReference type="PANTHER" id="PTHR11960">
    <property type="entry name" value="EUKARYOTIC TRANSLATION INITIATION FACTOR 4E RELATED"/>
    <property type="match status" value="1"/>
</dbReference>
<dbReference type="PANTHER" id="PTHR11960:SF8">
    <property type="entry name" value="EUKARYOTIC TRANSLATION INITIATION FACTOR 4E1-RELATED"/>
    <property type="match status" value="1"/>
</dbReference>
<dbReference type="Pfam" id="PF01652">
    <property type="entry name" value="IF4E"/>
    <property type="match status" value="1"/>
</dbReference>
<dbReference type="SUPFAM" id="SSF55418">
    <property type="entry name" value="eIF4e-like"/>
    <property type="match status" value="1"/>
</dbReference>
<dbReference type="PROSITE" id="PS00813">
    <property type="entry name" value="IF4E"/>
    <property type="match status" value="1"/>
</dbReference>
<accession>Q9P974</accession>
<accession>Q6FVJ2</accession>